<accession>Q3SWS9</accession>
<protein>
    <recommendedName>
        <fullName>Janus kinase and microtubule-interacting protein 1</fullName>
    </recommendedName>
    <alternativeName>
        <fullName>Multiple alpha helices and RNA-linker protein 1</fullName>
        <shortName>Marlin-1</shortName>
    </alternativeName>
</protein>
<name>JKIP1_RAT</name>
<reference key="1">
    <citation type="journal article" date="2004" name="Genome Res.">
        <title>The status, quality, and expansion of the NIH full-length cDNA project: the Mammalian Gene Collection (MGC).</title>
        <authorList>
            <consortium name="The MGC Project Team"/>
        </authorList>
    </citation>
    <scope>NUCLEOTIDE SEQUENCE [LARGE SCALE MRNA]</scope>
    <source>
        <tissue>Testis</tissue>
        <tissue>Thymus</tissue>
    </source>
</reference>
<reference key="2">
    <citation type="journal article" date="2004" name="J. Biol. Chem.">
        <title>Marlin-1, a novel RNA-binding protein associates with GABA receptors.</title>
        <authorList>
            <person name="Couve A."/>
            <person name="Restituito S."/>
            <person name="Brandon J.M."/>
            <person name="Charles K.J."/>
            <person name="Bawagan H."/>
            <person name="Freeman K.B."/>
            <person name="Pangalos M.N."/>
            <person name="Calver A.R."/>
            <person name="Moss S.J."/>
        </authorList>
    </citation>
    <scope>INTERACTION WITH GABBR1</scope>
    <scope>TOPOLOGY</scope>
    <scope>TISSUE SPECIFICITY</scope>
    <scope>SUBCELLULAR LOCATION</scope>
</reference>
<reference key="3">
    <citation type="journal article" date="2007" name="Mol. Cell. Neurosci.">
        <title>Marlin-1 and conventional kinesin link GABAB receptors to the cytoskeleton and regulate receptor transport.</title>
        <authorList>
            <person name="Vidal R.L."/>
            <person name="Ramirez O.A."/>
            <person name="Sandoval L."/>
            <person name="Koenig-Robert R."/>
            <person name="Haertel S."/>
            <person name="Couve A."/>
        </authorList>
    </citation>
    <scope>FUNCTION</scope>
    <scope>SUBCELLULAR LOCATION</scope>
</reference>
<reference key="4">
    <citation type="journal article" date="2008" name="J. Cell. Biochem.">
        <title>Marlin-1 is expressed in testis and associates to the cytoskeleton and GABA(B) receptors.</title>
        <authorList>
            <person name="Vidal R.L."/>
            <person name="Ramirez A."/>
            <person name="Castro M."/>
            <person name="Concha I.I."/>
            <person name="Couve A."/>
        </authorList>
    </citation>
    <scope>SUBCELLULAR LOCATION</scope>
    <scope>INTERACTION WITH GABABR1</scope>
    <scope>TISSUE SPECIFICITY</scope>
</reference>
<reference key="5">
    <citation type="journal article" date="2012" name="Nat. Commun.">
        <title>Quantitative maps of protein phosphorylation sites across 14 different rat organs and tissues.</title>
        <authorList>
            <person name="Lundby A."/>
            <person name="Secher A."/>
            <person name="Lage K."/>
            <person name="Nordsborg N.B."/>
            <person name="Dmytriyev A."/>
            <person name="Lundby C."/>
            <person name="Olsen J.V."/>
        </authorList>
    </citation>
    <scope>IDENTIFICATION BY MASS SPECTROMETRY [LARGE SCALE ANALYSIS]</scope>
</reference>
<sequence>MSKKGRSKGEKPETETDSVQMANEELRAKLTNIQIEFQQEKSKVGKLRERLQEAKLEREQEQRRHTAYISELKAKLHEEKTKELQALREALIRQHEQEAARTAKIKEGELQRLQATLNVLRDGAADKVKTALLADAREEARRTFDGERQRLQQEILELKAARKQAEEALSNCMQADKAKAADLRAAYQAHQDEVHRIKRECERDIRRLMDEIKGKERVILALEKELGVQAGQTQRLLLQKEALDEQLVQVKEAERHHSSPKRELPPGIGDMAELMGGQDQHMDERDVRRFQLKIAELNSVIRKLEDRNTLLADERNELLKRSRETEVQLKPLVEKNKRMNKKNEDLLHSIQRMEEKLKSLTRENVEMKEKLSAQASLKRHTSLNDLSLTRDEQEIEFLRLQVLEQQHVIDDLSLERERLLRSKRHRGKSLKPPKKHVVETFFGFDEESVDSETLSETSYNTDRTDRTPATPEEDLDETTTREEADLRFCQLTREYQALQRAYALLQEQVGGTLDAEREARTREQLQADLLRCQAKIEDLEKLLVEKGQDAAWVEEKQVLMRTNQDLLEKIYRLEMEENQLKSEMQDAKDQNELLEFRVLELEVRDSICCKLSNGADILFEPKLKFV</sequence>
<gene>
    <name type="primary">Jakmip1</name>
    <name type="synonym">Marlin1</name>
</gene>
<dbReference type="EMBL" id="BC104677">
    <property type="protein sequence ID" value="AAI04678.1"/>
    <property type="molecule type" value="mRNA"/>
</dbReference>
<dbReference type="EMBL" id="BC104718">
    <property type="protein sequence ID" value="AAI04719.1"/>
    <property type="molecule type" value="mRNA"/>
</dbReference>
<dbReference type="RefSeq" id="NP_001029066.1">
    <property type="nucleotide sequence ID" value="NM_001033894.1"/>
</dbReference>
<dbReference type="RefSeq" id="NP_001387991.1">
    <property type="nucleotide sequence ID" value="NM_001401062.1"/>
</dbReference>
<dbReference type="RefSeq" id="XP_063129217.1">
    <property type="nucleotide sequence ID" value="XM_063273147.1"/>
</dbReference>
<dbReference type="SMR" id="Q3SWS9"/>
<dbReference type="FunCoup" id="Q3SWS9">
    <property type="interactions" value="351"/>
</dbReference>
<dbReference type="STRING" id="10116.ENSRNOP00000006771"/>
<dbReference type="iPTMnet" id="Q3SWS9"/>
<dbReference type="PhosphoSitePlus" id="Q3SWS9"/>
<dbReference type="jPOST" id="Q3SWS9"/>
<dbReference type="PaxDb" id="10116-ENSRNOP00000006771"/>
<dbReference type="GeneID" id="305434"/>
<dbReference type="KEGG" id="rno:305434"/>
<dbReference type="AGR" id="RGD:1562401"/>
<dbReference type="CTD" id="152789"/>
<dbReference type="RGD" id="1562401">
    <property type="gene designation" value="Jakmip1"/>
</dbReference>
<dbReference type="VEuPathDB" id="HostDB:ENSRNOG00000004998"/>
<dbReference type="eggNOG" id="ENOG502QS6X">
    <property type="taxonomic scope" value="Eukaryota"/>
</dbReference>
<dbReference type="HOGENOM" id="CLU_020294_2_0_1"/>
<dbReference type="InParanoid" id="Q3SWS9"/>
<dbReference type="PhylomeDB" id="Q3SWS9"/>
<dbReference type="TreeFam" id="TF331900"/>
<dbReference type="PRO" id="PR:Q3SWS9"/>
<dbReference type="Proteomes" id="UP000002494">
    <property type="component" value="Chromosome 14"/>
</dbReference>
<dbReference type="Bgee" id="ENSRNOG00000004998">
    <property type="expression patterns" value="Expressed in frontal cortex and 15 other cell types or tissues"/>
</dbReference>
<dbReference type="GO" id="GO:0005737">
    <property type="term" value="C:cytoplasm"/>
    <property type="evidence" value="ECO:0007669"/>
    <property type="project" value="UniProtKB-KW"/>
</dbReference>
<dbReference type="GO" id="GO:0016020">
    <property type="term" value="C:membrane"/>
    <property type="evidence" value="ECO:0000266"/>
    <property type="project" value="RGD"/>
</dbReference>
<dbReference type="GO" id="GO:0005874">
    <property type="term" value="C:microtubule"/>
    <property type="evidence" value="ECO:0007669"/>
    <property type="project" value="UniProtKB-KW"/>
</dbReference>
<dbReference type="GO" id="GO:0015630">
    <property type="term" value="C:microtubule cytoskeleton"/>
    <property type="evidence" value="ECO:0000314"/>
    <property type="project" value="MGI"/>
</dbReference>
<dbReference type="GO" id="GO:1990904">
    <property type="term" value="C:ribonucleoprotein complex"/>
    <property type="evidence" value="ECO:0000266"/>
    <property type="project" value="RGD"/>
</dbReference>
<dbReference type="GO" id="GO:0050811">
    <property type="term" value="F:GABA receptor binding"/>
    <property type="evidence" value="ECO:0000266"/>
    <property type="project" value="RGD"/>
</dbReference>
<dbReference type="GO" id="GO:0019900">
    <property type="term" value="F:kinase binding"/>
    <property type="evidence" value="ECO:0007669"/>
    <property type="project" value="InterPro"/>
</dbReference>
<dbReference type="GO" id="GO:0019894">
    <property type="term" value="F:kinesin binding"/>
    <property type="evidence" value="ECO:0000266"/>
    <property type="project" value="RGD"/>
</dbReference>
<dbReference type="GO" id="GO:0008017">
    <property type="term" value="F:microtubule binding"/>
    <property type="evidence" value="ECO:0007669"/>
    <property type="project" value="InterPro"/>
</dbReference>
<dbReference type="GO" id="GO:0003723">
    <property type="term" value="F:RNA binding"/>
    <property type="evidence" value="ECO:0000266"/>
    <property type="project" value="RGD"/>
</dbReference>
<dbReference type="GO" id="GO:0050890">
    <property type="term" value="P:cognition"/>
    <property type="evidence" value="ECO:0000266"/>
    <property type="project" value="RGD"/>
</dbReference>
<dbReference type="GO" id="GO:0015031">
    <property type="term" value="P:protein transport"/>
    <property type="evidence" value="ECO:0007669"/>
    <property type="project" value="UniProtKB-KW"/>
</dbReference>
<dbReference type="InterPro" id="IPR024836">
    <property type="entry name" value="JAKMIP"/>
</dbReference>
<dbReference type="InterPro" id="IPR031994">
    <property type="entry name" value="JAKMIP_C"/>
</dbReference>
<dbReference type="PANTHER" id="PTHR18935">
    <property type="entry name" value="GOLGIN SUBFAMILY A MEMBER 4-LIKE ISOFORM X1"/>
    <property type="match status" value="1"/>
</dbReference>
<dbReference type="PANTHER" id="PTHR18935:SF6">
    <property type="entry name" value="JANUS KINASE AND MICROTUBULE-INTERACTING PROTEIN 1"/>
    <property type="match status" value="1"/>
</dbReference>
<dbReference type="Pfam" id="PF16034">
    <property type="entry name" value="JAKMIP_CC3"/>
    <property type="match status" value="1"/>
</dbReference>
<comment type="function">
    <text evidence="6">Associates with microtubules and may play a role in the microtubule-dependent transport of the GABA-B receptor. May play a role in JAK1 signaling and regulate microtubule cytoskeleton rearrangements.</text>
</comment>
<comment type="subunit">
    <text evidence="1 5 7">Homodimer (By similarity). Interacts with JAK1 and TYK2 (By similarity). Forms a complex with GABBR1 and KIF5B/kinesin-1.</text>
</comment>
<comment type="subcellular location">
    <subcellularLocation>
        <location>Cytoplasm</location>
        <location>Cytoskeleton</location>
    </subcellularLocation>
    <subcellularLocation>
        <location>Membrane</location>
        <topology>Peripheral membrane protein</topology>
    </subcellularLocation>
    <text>Colocalizes with the microtubule network. Localizes to the cell body and neurites of hippocampal neurons where it accumulates in granules. Localizes to the tail and to a lower extent to the head of sperm cells.</text>
</comment>
<comment type="tissue specificity">
    <text evidence="5 7">Specifically expressed in brain and testis by spermatogonia, spermatocytes, spermatozoa and Sertoli cells (at protein level).</text>
</comment>
<comment type="PTM">
    <text evidence="1">Phosphorylated.</text>
</comment>
<comment type="similarity">
    <text evidence="8">Belongs to the JAKMIP family.</text>
</comment>
<evidence type="ECO:0000250" key="1"/>
<evidence type="ECO:0000250" key="2">
    <source>
        <dbReference type="UniProtKB" id="Q96N16"/>
    </source>
</evidence>
<evidence type="ECO:0000255" key="3"/>
<evidence type="ECO:0000256" key="4">
    <source>
        <dbReference type="SAM" id="MobiDB-lite"/>
    </source>
</evidence>
<evidence type="ECO:0000269" key="5">
    <source>
    </source>
</evidence>
<evidence type="ECO:0000269" key="6">
    <source>
    </source>
</evidence>
<evidence type="ECO:0000269" key="7">
    <source>
    </source>
</evidence>
<evidence type="ECO:0000305" key="8"/>
<keyword id="KW-0175">Coiled coil</keyword>
<keyword id="KW-0963">Cytoplasm</keyword>
<keyword id="KW-0206">Cytoskeleton</keyword>
<keyword id="KW-0472">Membrane</keyword>
<keyword id="KW-0493">Microtubule</keyword>
<keyword id="KW-0597">Phosphoprotein</keyword>
<keyword id="KW-0653">Protein transport</keyword>
<keyword id="KW-1185">Reference proteome</keyword>
<keyword id="KW-0813">Transport</keyword>
<organism>
    <name type="scientific">Rattus norvegicus</name>
    <name type="common">Rat</name>
    <dbReference type="NCBI Taxonomy" id="10116"/>
    <lineage>
        <taxon>Eukaryota</taxon>
        <taxon>Metazoa</taxon>
        <taxon>Chordata</taxon>
        <taxon>Craniata</taxon>
        <taxon>Vertebrata</taxon>
        <taxon>Euteleostomi</taxon>
        <taxon>Mammalia</taxon>
        <taxon>Eutheria</taxon>
        <taxon>Euarchontoglires</taxon>
        <taxon>Glires</taxon>
        <taxon>Rodentia</taxon>
        <taxon>Myomorpha</taxon>
        <taxon>Muroidea</taxon>
        <taxon>Muridae</taxon>
        <taxon>Murinae</taxon>
        <taxon>Rattus</taxon>
    </lineage>
</organism>
<feature type="chain" id="PRO_0000323010" description="Janus kinase and microtubule-interacting protein 1">
    <location>
        <begin position="1"/>
        <end position="626"/>
    </location>
</feature>
<feature type="region of interest" description="Mediates association with microtubules" evidence="1">
    <location>
        <begin position="1"/>
        <end position="365"/>
    </location>
</feature>
<feature type="region of interest" description="Disordered" evidence="4">
    <location>
        <begin position="1"/>
        <end position="25"/>
    </location>
</feature>
<feature type="region of interest" description="Mediates interaction with TYK2 and GABBR1" evidence="1">
    <location>
        <begin position="365"/>
        <end position="626"/>
    </location>
</feature>
<feature type="region of interest" description="Disordered" evidence="4">
    <location>
        <begin position="452"/>
        <end position="481"/>
    </location>
</feature>
<feature type="coiled-coil region" evidence="3">
    <location>
        <begin position="13"/>
        <end position="255"/>
    </location>
</feature>
<feature type="coiled-coil region" evidence="3">
    <location>
        <begin position="284"/>
        <end position="413"/>
    </location>
</feature>
<feature type="coiled-coil region" evidence="3">
    <location>
        <begin position="490"/>
        <end position="604"/>
    </location>
</feature>
<feature type="compositionally biased region" description="Polar residues" evidence="4">
    <location>
        <begin position="452"/>
        <end position="461"/>
    </location>
</feature>
<feature type="modified residue" description="Phosphoserine" evidence="2">
    <location>
        <position position="382"/>
    </location>
</feature>
<feature type="modified residue" description="Phosphothreonine" evidence="2">
    <location>
        <position position="470"/>
    </location>
</feature>
<proteinExistence type="evidence at protein level"/>